<dbReference type="EMBL" id="CP000094">
    <property type="protein sequence ID" value="ABA72765.1"/>
    <property type="molecule type" value="Genomic_DNA"/>
</dbReference>
<dbReference type="RefSeq" id="WP_003175895.1">
    <property type="nucleotide sequence ID" value="NC_007492.2"/>
</dbReference>
<dbReference type="SMR" id="Q3KHJ1"/>
<dbReference type="GeneID" id="98109589"/>
<dbReference type="KEGG" id="pfo:Pfl01_1022"/>
<dbReference type="eggNOG" id="COG0335">
    <property type="taxonomic scope" value="Bacteria"/>
</dbReference>
<dbReference type="HOGENOM" id="CLU_103507_1_0_6"/>
<dbReference type="Proteomes" id="UP000002704">
    <property type="component" value="Chromosome"/>
</dbReference>
<dbReference type="GO" id="GO:0022625">
    <property type="term" value="C:cytosolic large ribosomal subunit"/>
    <property type="evidence" value="ECO:0007669"/>
    <property type="project" value="TreeGrafter"/>
</dbReference>
<dbReference type="GO" id="GO:0003735">
    <property type="term" value="F:structural constituent of ribosome"/>
    <property type="evidence" value="ECO:0007669"/>
    <property type="project" value="InterPro"/>
</dbReference>
<dbReference type="GO" id="GO:0006412">
    <property type="term" value="P:translation"/>
    <property type="evidence" value="ECO:0007669"/>
    <property type="project" value="UniProtKB-UniRule"/>
</dbReference>
<dbReference type="FunFam" id="2.30.30.790:FF:000001">
    <property type="entry name" value="50S ribosomal protein L19"/>
    <property type="match status" value="1"/>
</dbReference>
<dbReference type="Gene3D" id="2.30.30.790">
    <property type="match status" value="1"/>
</dbReference>
<dbReference type="HAMAP" id="MF_00402">
    <property type="entry name" value="Ribosomal_bL19"/>
    <property type="match status" value="1"/>
</dbReference>
<dbReference type="InterPro" id="IPR001857">
    <property type="entry name" value="Ribosomal_bL19"/>
</dbReference>
<dbReference type="InterPro" id="IPR018257">
    <property type="entry name" value="Ribosomal_bL19_CS"/>
</dbReference>
<dbReference type="InterPro" id="IPR038657">
    <property type="entry name" value="Ribosomal_bL19_sf"/>
</dbReference>
<dbReference type="InterPro" id="IPR008991">
    <property type="entry name" value="Translation_prot_SH3-like_sf"/>
</dbReference>
<dbReference type="NCBIfam" id="TIGR01024">
    <property type="entry name" value="rplS_bact"/>
    <property type="match status" value="1"/>
</dbReference>
<dbReference type="PANTHER" id="PTHR15680:SF9">
    <property type="entry name" value="LARGE RIBOSOMAL SUBUNIT PROTEIN BL19M"/>
    <property type="match status" value="1"/>
</dbReference>
<dbReference type="PANTHER" id="PTHR15680">
    <property type="entry name" value="RIBOSOMAL PROTEIN L19"/>
    <property type="match status" value="1"/>
</dbReference>
<dbReference type="Pfam" id="PF01245">
    <property type="entry name" value="Ribosomal_L19"/>
    <property type="match status" value="1"/>
</dbReference>
<dbReference type="PIRSF" id="PIRSF002191">
    <property type="entry name" value="Ribosomal_L19"/>
    <property type="match status" value="1"/>
</dbReference>
<dbReference type="PRINTS" id="PR00061">
    <property type="entry name" value="RIBOSOMALL19"/>
</dbReference>
<dbReference type="SUPFAM" id="SSF50104">
    <property type="entry name" value="Translation proteins SH3-like domain"/>
    <property type="match status" value="1"/>
</dbReference>
<dbReference type="PROSITE" id="PS01015">
    <property type="entry name" value="RIBOSOMAL_L19"/>
    <property type="match status" value="1"/>
</dbReference>
<sequence length="116" mass="12969">MTNKIILALEAEQMTKEIPTFAPGDTIVVQVKVKEGDRSRLQAFEGVVIAKRNRGVNSAFTVRKISNGVGVERTFQTYSPQIDSMAVKRRGDVRKAKLYYLRDLSGKAARIKEKLA</sequence>
<accession>Q3KHJ1</accession>
<organism>
    <name type="scientific">Pseudomonas fluorescens (strain Pf0-1)</name>
    <dbReference type="NCBI Taxonomy" id="205922"/>
    <lineage>
        <taxon>Bacteria</taxon>
        <taxon>Pseudomonadati</taxon>
        <taxon>Pseudomonadota</taxon>
        <taxon>Gammaproteobacteria</taxon>
        <taxon>Pseudomonadales</taxon>
        <taxon>Pseudomonadaceae</taxon>
        <taxon>Pseudomonas</taxon>
    </lineage>
</organism>
<feature type="chain" id="PRO_0000226863" description="Large ribosomal subunit protein bL19">
    <location>
        <begin position="1"/>
        <end position="116"/>
    </location>
</feature>
<protein>
    <recommendedName>
        <fullName evidence="1">Large ribosomal subunit protein bL19</fullName>
    </recommendedName>
    <alternativeName>
        <fullName evidence="2">50S ribosomal protein L19</fullName>
    </alternativeName>
</protein>
<comment type="function">
    <text evidence="1">This protein is located at the 30S-50S ribosomal subunit interface and may play a role in the structure and function of the aminoacyl-tRNA binding site.</text>
</comment>
<comment type="similarity">
    <text evidence="1">Belongs to the bacterial ribosomal protein bL19 family.</text>
</comment>
<evidence type="ECO:0000255" key="1">
    <source>
        <dbReference type="HAMAP-Rule" id="MF_00402"/>
    </source>
</evidence>
<evidence type="ECO:0000305" key="2"/>
<gene>
    <name evidence="1" type="primary">rplS</name>
    <name type="ordered locus">Pfl01_1022</name>
</gene>
<reference key="1">
    <citation type="journal article" date="2009" name="Genome Biol.">
        <title>Genomic and genetic analyses of diversity and plant interactions of Pseudomonas fluorescens.</title>
        <authorList>
            <person name="Silby M.W."/>
            <person name="Cerdeno-Tarraga A.M."/>
            <person name="Vernikos G.S."/>
            <person name="Giddens S.R."/>
            <person name="Jackson R.W."/>
            <person name="Preston G.M."/>
            <person name="Zhang X.-X."/>
            <person name="Moon C.D."/>
            <person name="Gehrig S.M."/>
            <person name="Godfrey S.A.C."/>
            <person name="Knight C.G."/>
            <person name="Malone J.G."/>
            <person name="Robinson Z."/>
            <person name="Spiers A.J."/>
            <person name="Harris S."/>
            <person name="Challis G.L."/>
            <person name="Yaxley A.M."/>
            <person name="Harris D."/>
            <person name="Seeger K."/>
            <person name="Murphy L."/>
            <person name="Rutter S."/>
            <person name="Squares R."/>
            <person name="Quail M.A."/>
            <person name="Saunders E."/>
            <person name="Mavromatis K."/>
            <person name="Brettin T.S."/>
            <person name="Bentley S.D."/>
            <person name="Hothersall J."/>
            <person name="Stephens E."/>
            <person name="Thomas C.M."/>
            <person name="Parkhill J."/>
            <person name="Levy S.B."/>
            <person name="Rainey P.B."/>
            <person name="Thomson N.R."/>
        </authorList>
    </citation>
    <scope>NUCLEOTIDE SEQUENCE [LARGE SCALE GENOMIC DNA]</scope>
    <source>
        <strain>Pf0-1</strain>
    </source>
</reference>
<proteinExistence type="inferred from homology"/>
<keyword id="KW-0687">Ribonucleoprotein</keyword>
<keyword id="KW-0689">Ribosomal protein</keyword>
<name>RL19_PSEPF</name>